<organism>
    <name type="scientific">Thermosipho melanesiensis (strain DSM 12029 / CIP 104789 / BI429)</name>
    <dbReference type="NCBI Taxonomy" id="391009"/>
    <lineage>
        <taxon>Bacteria</taxon>
        <taxon>Thermotogati</taxon>
        <taxon>Thermotogota</taxon>
        <taxon>Thermotogae</taxon>
        <taxon>Thermotogales</taxon>
        <taxon>Fervidobacteriaceae</taxon>
        <taxon>Thermosipho</taxon>
    </lineage>
</organism>
<gene>
    <name evidence="1" type="primary">rimO</name>
    <name type="ordered locus">Tmel_1155</name>
</gene>
<reference key="1">
    <citation type="submission" date="2007-05" db="EMBL/GenBank/DDBJ databases">
        <title>Complete sequence of Thermosipho melanesiensis BI429.</title>
        <authorList>
            <consortium name="US DOE Joint Genome Institute"/>
            <person name="Copeland A."/>
            <person name="Lucas S."/>
            <person name="Lapidus A."/>
            <person name="Barry K."/>
            <person name="Glavina del Rio T."/>
            <person name="Dalin E."/>
            <person name="Tice H."/>
            <person name="Pitluck S."/>
            <person name="Chertkov O."/>
            <person name="Brettin T."/>
            <person name="Bruce D."/>
            <person name="Detter J.C."/>
            <person name="Han C."/>
            <person name="Schmutz J."/>
            <person name="Larimer F."/>
            <person name="Land M."/>
            <person name="Hauser L."/>
            <person name="Kyrpides N."/>
            <person name="Mikhailova N."/>
            <person name="Nelson K."/>
            <person name="Gogarten J.P."/>
            <person name="Noll K."/>
            <person name="Richardson P."/>
        </authorList>
    </citation>
    <scope>NUCLEOTIDE SEQUENCE [LARGE SCALE GENOMIC DNA]</scope>
    <source>
        <strain>DSM 12029 / CIP 104789 / BI429</strain>
    </source>
</reference>
<proteinExistence type="inferred from homology"/>
<keyword id="KW-0004">4Fe-4S</keyword>
<keyword id="KW-0963">Cytoplasm</keyword>
<keyword id="KW-0408">Iron</keyword>
<keyword id="KW-0411">Iron-sulfur</keyword>
<keyword id="KW-0479">Metal-binding</keyword>
<keyword id="KW-0949">S-adenosyl-L-methionine</keyword>
<keyword id="KW-0808">Transferase</keyword>
<name>RIMO_THEM4</name>
<protein>
    <recommendedName>
        <fullName evidence="1">Ribosomal protein uS12 methylthiotransferase RimO</fullName>
        <shortName evidence="1">uS12 MTTase</shortName>
        <shortName evidence="1">uS12 methylthiotransferase</shortName>
        <ecNumber evidence="1">2.8.4.4</ecNumber>
    </recommendedName>
    <alternativeName>
        <fullName evidence="1">Ribosomal protein uS12 (aspartate-C(3))-methylthiotransferase</fullName>
    </alternativeName>
    <alternativeName>
        <fullName evidence="1">Ribosome maturation factor RimO</fullName>
    </alternativeName>
</protein>
<comment type="function">
    <text evidence="1">Catalyzes the methylthiolation of an aspartic acid residue of ribosomal protein uS12.</text>
</comment>
<comment type="catalytic activity">
    <reaction evidence="1">
        <text>L-aspartate(89)-[ribosomal protein uS12]-hydrogen + (sulfur carrier)-SH + AH2 + 2 S-adenosyl-L-methionine = 3-methylsulfanyl-L-aspartate(89)-[ribosomal protein uS12]-hydrogen + (sulfur carrier)-H + 5'-deoxyadenosine + L-methionine + A + S-adenosyl-L-homocysteine + 2 H(+)</text>
        <dbReference type="Rhea" id="RHEA:37087"/>
        <dbReference type="Rhea" id="RHEA-COMP:10460"/>
        <dbReference type="Rhea" id="RHEA-COMP:10461"/>
        <dbReference type="Rhea" id="RHEA-COMP:14737"/>
        <dbReference type="Rhea" id="RHEA-COMP:14739"/>
        <dbReference type="ChEBI" id="CHEBI:13193"/>
        <dbReference type="ChEBI" id="CHEBI:15378"/>
        <dbReference type="ChEBI" id="CHEBI:17319"/>
        <dbReference type="ChEBI" id="CHEBI:17499"/>
        <dbReference type="ChEBI" id="CHEBI:29917"/>
        <dbReference type="ChEBI" id="CHEBI:29961"/>
        <dbReference type="ChEBI" id="CHEBI:57844"/>
        <dbReference type="ChEBI" id="CHEBI:57856"/>
        <dbReference type="ChEBI" id="CHEBI:59789"/>
        <dbReference type="ChEBI" id="CHEBI:64428"/>
        <dbReference type="ChEBI" id="CHEBI:73599"/>
        <dbReference type="EC" id="2.8.4.4"/>
    </reaction>
</comment>
<comment type="cofactor">
    <cofactor evidence="1">
        <name>[4Fe-4S] cluster</name>
        <dbReference type="ChEBI" id="CHEBI:49883"/>
    </cofactor>
    <text evidence="1">Binds 2 [4Fe-4S] clusters. One cluster is coordinated with 3 cysteines and an exchangeable S-adenosyl-L-methionine.</text>
</comment>
<comment type="subcellular location">
    <subcellularLocation>
        <location evidence="1">Cytoplasm</location>
    </subcellularLocation>
</comment>
<comment type="similarity">
    <text evidence="1">Belongs to the methylthiotransferase family. RimO subfamily.</text>
</comment>
<evidence type="ECO:0000255" key="1">
    <source>
        <dbReference type="HAMAP-Rule" id="MF_01865"/>
    </source>
</evidence>
<evidence type="ECO:0000255" key="2">
    <source>
        <dbReference type="PROSITE-ProRule" id="PRU01266"/>
    </source>
</evidence>
<sequence>MNFYVEVLGCPKNEADCALLKSHLRKMGNNIVDNLSDADAVIIDTCGFILDAKKESIEEILSYVEYKKGKNLKVFVTGCLVQRFGKELKKEIPEVDGWFGVLPPKEIATHIGKRNVIPEVPEPVYNFEGRVDNGQYAYVKISDGCDRACSFCTIPLFKGSFKSRKIDDILKEIEFLIERKIKEIILVAQDTTGYGIDIYRKQMLPELLKRINDLSGDFWVRVMYMHPDHITDDIIEAFSYDKVLKYFDIPVQNGSDKILKLMNRSRKTRQLYSLFEKIRNFYSDAILRTSIIVGFPGETRKDFDETLKFIKEVKFDRLGAFIYSDEEEASSFSLSGKVPREIAEERLEELMDIQSQISFEKNEKLVGKKLKVLFDEEEDGVLIGRSYMDAPEIDANVFVRGEFKKGFFDVKITSADIYDLEGEIVEE</sequence>
<dbReference type="EC" id="2.8.4.4" evidence="1"/>
<dbReference type="EMBL" id="CP000716">
    <property type="protein sequence ID" value="ABR31010.1"/>
    <property type="molecule type" value="Genomic_DNA"/>
</dbReference>
<dbReference type="RefSeq" id="WP_012057369.1">
    <property type="nucleotide sequence ID" value="NC_009616.1"/>
</dbReference>
<dbReference type="SMR" id="A6LM59"/>
<dbReference type="STRING" id="391009.Tmel_1155"/>
<dbReference type="KEGG" id="tme:Tmel_1155"/>
<dbReference type="eggNOG" id="COG0621">
    <property type="taxonomic scope" value="Bacteria"/>
</dbReference>
<dbReference type="HOGENOM" id="CLU_018697_0_0_0"/>
<dbReference type="OrthoDB" id="9805215at2"/>
<dbReference type="Proteomes" id="UP000001110">
    <property type="component" value="Chromosome"/>
</dbReference>
<dbReference type="GO" id="GO:0005829">
    <property type="term" value="C:cytosol"/>
    <property type="evidence" value="ECO:0007669"/>
    <property type="project" value="TreeGrafter"/>
</dbReference>
<dbReference type="GO" id="GO:0051539">
    <property type="term" value="F:4 iron, 4 sulfur cluster binding"/>
    <property type="evidence" value="ECO:0007669"/>
    <property type="project" value="UniProtKB-UniRule"/>
</dbReference>
<dbReference type="GO" id="GO:0035599">
    <property type="term" value="F:aspartic acid methylthiotransferase activity"/>
    <property type="evidence" value="ECO:0007669"/>
    <property type="project" value="TreeGrafter"/>
</dbReference>
<dbReference type="GO" id="GO:0046872">
    <property type="term" value="F:metal ion binding"/>
    <property type="evidence" value="ECO:0007669"/>
    <property type="project" value="UniProtKB-KW"/>
</dbReference>
<dbReference type="GO" id="GO:0103039">
    <property type="term" value="F:protein methylthiotransferase activity"/>
    <property type="evidence" value="ECO:0007669"/>
    <property type="project" value="UniProtKB-EC"/>
</dbReference>
<dbReference type="GO" id="GO:0006400">
    <property type="term" value="P:tRNA modification"/>
    <property type="evidence" value="ECO:0007669"/>
    <property type="project" value="InterPro"/>
</dbReference>
<dbReference type="CDD" id="cd01335">
    <property type="entry name" value="Radical_SAM"/>
    <property type="match status" value="1"/>
</dbReference>
<dbReference type="FunFam" id="3.80.30.20:FF:000001">
    <property type="entry name" value="tRNA-2-methylthio-N(6)-dimethylallyladenosine synthase 2"/>
    <property type="match status" value="1"/>
</dbReference>
<dbReference type="Gene3D" id="3.40.50.12160">
    <property type="entry name" value="Methylthiotransferase, N-terminal domain"/>
    <property type="match status" value="1"/>
</dbReference>
<dbReference type="Gene3D" id="2.40.50.140">
    <property type="entry name" value="Nucleic acid-binding proteins"/>
    <property type="match status" value="1"/>
</dbReference>
<dbReference type="Gene3D" id="3.80.30.20">
    <property type="entry name" value="tm_1862 like domain"/>
    <property type="match status" value="1"/>
</dbReference>
<dbReference type="HAMAP" id="MF_01865">
    <property type="entry name" value="MTTase_RimO"/>
    <property type="match status" value="1"/>
</dbReference>
<dbReference type="InterPro" id="IPR006638">
    <property type="entry name" value="Elp3/MiaA/NifB-like_rSAM"/>
</dbReference>
<dbReference type="InterPro" id="IPR005839">
    <property type="entry name" value="Methylthiotransferase"/>
</dbReference>
<dbReference type="InterPro" id="IPR020612">
    <property type="entry name" value="Methylthiotransferase_CS"/>
</dbReference>
<dbReference type="InterPro" id="IPR013848">
    <property type="entry name" value="Methylthiotransferase_N"/>
</dbReference>
<dbReference type="InterPro" id="IPR038135">
    <property type="entry name" value="Methylthiotransferase_N_sf"/>
</dbReference>
<dbReference type="InterPro" id="IPR012340">
    <property type="entry name" value="NA-bd_OB-fold"/>
</dbReference>
<dbReference type="InterPro" id="IPR005840">
    <property type="entry name" value="Ribosomal_uS12_MeSTrfase_RimO"/>
</dbReference>
<dbReference type="InterPro" id="IPR007197">
    <property type="entry name" value="rSAM"/>
</dbReference>
<dbReference type="InterPro" id="IPR023404">
    <property type="entry name" value="rSAM_horseshoe"/>
</dbReference>
<dbReference type="InterPro" id="IPR002792">
    <property type="entry name" value="TRAM_dom"/>
</dbReference>
<dbReference type="NCBIfam" id="TIGR01125">
    <property type="entry name" value="30S ribosomal protein S12 methylthiotransferase RimO"/>
    <property type="match status" value="1"/>
</dbReference>
<dbReference type="NCBIfam" id="TIGR00089">
    <property type="entry name" value="MiaB/RimO family radical SAM methylthiotransferase"/>
    <property type="match status" value="1"/>
</dbReference>
<dbReference type="PANTHER" id="PTHR43837">
    <property type="entry name" value="RIBOSOMAL PROTEIN S12 METHYLTHIOTRANSFERASE RIMO"/>
    <property type="match status" value="1"/>
</dbReference>
<dbReference type="PANTHER" id="PTHR43837:SF1">
    <property type="entry name" value="RIBOSOMAL PROTEIN US12 METHYLTHIOTRANSFERASE RIMO"/>
    <property type="match status" value="1"/>
</dbReference>
<dbReference type="Pfam" id="PF04055">
    <property type="entry name" value="Radical_SAM"/>
    <property type="match status" value="1"/>
</dbReference>
<dbReference type="Pfam" id="PF18693">
    <property type="entry name" value="TRAM_2"/>
    <property type="match status" value="1"/>
</dbReference>
<dbReference type="Pfam" id="PF00919">
    <property type="entry name" value="UPF0004"/>
    <property type="match status" value="1"/>
</dbReference>
<dbReference type="SFLD" id="SFLDG01082">
    <property type="entry name" value="B12-binding_domain_containing"/>
    <property type="match status" value="1"/>
</dbReference>
<dbReference type="SFLD" id="SFLDG01061">
    <property type="entry name" value="methylthiotransferase"/>
    <property type="match status" value="1"/>
</dbReference>
<dbReference type="SFLD" id="SFLDF00274">
    <property type="entry name" value="ribosomal_protein_S12_methylth"/>
    <property type="match status" value="1"/>
</dbReference>
<dbReference type="SMART" id="SM00729">
    <property type="entry name" value="Elp3"/>
    <property type="match status" value="1"/>
</dbReference>
<dbReference type="SUPFAM" id="SSF102114">
    <property type="entry name" value="Radical SAM enzymes"/>
    <property type="match status" value="1"/>
</dbReference>
<dbReference type="PROSITE" id="PS51449">
    <property type="entry name" value="MTTASE_N"/>
    <property type="match status" value="1"/>
</dbReference>
<dbReference type="PROSITE" id="PS01278">
    <property type="entry name" value="MTTASE_RADICAL"/>
    <property type="match status" value="1"/>
</dbReference>
<dbReference type="PROSITE" id="PS51918">
    <property type="entry name" value="RADICAL_SAM"/>
    <property type="match status" value="1"/>
</dbReference>
<dbReference type="PROSITE" id="PS50926">
    <property type="entry name" value="TRAM"/>
    <property type="match status" value="1"/>
</dbReference>
<accession>A6LM59</accession>
<feature type="chain" id="PRO_0000375049" description="Ribosomal protein uS12 methylthiotransferase RimO">
    <location>
        <begin position="1"/>
        <end position="427"/>
    </location>
</feature>
<feature type="domain" description="MTTase N-terminal" evidence="1">
    <location>
        <begin position="1"/>
        <end position="116"/>
    </location>
</feature>
<feature type="domain" description="Radical SAM core" evidence="2">
    <location>
        <begin position="131"/>
        <end position="360"/>
    </location>
</feature>
<feature type="domain" description="TRAM" evidence="1">
    <location>
        <begin position="363"/>
        <end position="426"/>
    </location>
</feature>
<feature type="binding site" evidence="1">
    <location>
        <position position="10"/>
    </location>
    <ligand>
        <name>[4Fe-4S] cluster</name>
        <dbReference type="ChEBI" id="CHEBI:49883"/>
        <label>1</label>
    </ligand>
</feature>
<feature type="binding site" evidence="1">
    <location>
        <position position="46"/>
    </location>
    <ligand>
        <name>[4Fe-4S] cluster</name>
        <dbReference type="ChEBI" id="CHEBI:49883"/>
        <label>1</label>
    </ligand>
</feature>
<feature type="binding site" evidence="1">
    <location>
        <position position="79"/>
    </location>
    <ligand>
        <name>[4Fe-4S] cluster</name>
        <dbReference type="ChEBI" id="CHEBI:49883"/>
        <label>1</label>
    </ligand>
</feature>
<feature type="binding site" evidence="1">
    <location>
        <position position="145"/>
    </location>
    <ligand>
        <name>[4Fe-4S] cluster</name>
        <dbReference type="ChEBI" id="CHEBI:49883"/>
        <label>2</label>
        <note>4Fe-4S-S-AdoMet</note>
    </ligand>
</feature>
<feature type="binding site" evidence="1">
    <location>
        <position position="149"/>
    </location>
    <ligand>
        <name>[4Fe-4S] cluster</name>
        <dbReference type="ChEBI" id="CHEBI:49883"/>
        <label>2</label>
        <note>4Fe-4S-S-AdoMet</note>
    </ligand>
</feature>
<feature type="binding site" evidence="1">
    <location>
        <position position="152"/>
    </location>
    <ligand>
        <name>[4Fe-4S] cluster</name>
        <dbReference type="ChEBI" id="CHEBI:49883"/>
        <label>2</label>
        <note>4Fe-4S-S-AdoMet</note>
    </ligand>
</feature>